<feature type="chain" id="PRO_1000204372" description="Translation initiation factor 2 subunit alpha">
    <location>
        <begin position="1"/>
        <end position="266"/>
    </location>
</feature>
<feature type="domain" description="S1 motif" evidence="1">
    <location>
        <begin position="12"/>
        <end position="83"/>
    </location>
</feature>
<sequence>MIYSRSRLPSEGEILIATVKQVFDYGSYITLDEYGGLQAFLPWSEVSSKWVKNIRDVLKENRKVVVKVIRVDRRKGTVDVSLKKVTDDERRKKNLQWKKIQRLDKILELVSQQLKLSEKDAWEQVAWKLEAKYGDPISAIERAVKEGEKILIDAGVPEIWIKPLLEEAAKHTEEKKVKMSGLITVKTSEPLGVQKIKEVMSKALENIEQDYESILNVKIYTIGAPRYRVDVVGTNPKDASEALNQIISNLIKIGKEENVDISVVKK</sequence>
<protein>
    <recommendedName>
        <fullName evidence="1">Translation initiation factor 2 subunit alpha</fullName>
    </recommendedName>
    <alternativeName>
        <fullName evidence="1">aIF2-alpha</fullName>
    </alternativeName>
    <alternativeName>
        <fullName evidence="1">eIF-2-alpha</fullName>
    </alternativeName>
</protein>
<keyword id="KW-0396">Initiation factor</keyword>
<keyword id="KW-0648">Protein biosynthesis</keyword>
<keyword id="KW-0694">RNA-binding</keyword>
<proteinExistence type="inferred from homology"/>
<accession>C3MPG3</accession>
<reference key="1">
    <citation type="journal article" date="2009" name="Proc. Natl. Acad. Sci. U.S.A.">
        <title>Biogeography of the Sulfolobus islandicus pan-genome.</title>
        <authorList>
            <person name="Reno M.L."/>
            <person name="Held N.L."/>
            <person name="Fields C.J."/>
            <person name="Burke P.V."/>
            <person name="Whitaker R.J."/>
        </authorList>
    </citation>
    <scope>NUCLEOTIDE SEQUENCE [LARGE SCALE GENOMIC DNA]</scope>
    <source>
        <strain>L.S.2.15 / Lassen #1</strain>
    </source>
</reference>
<comment type="function">
    <text evidence="1">eIF-2 functions in the early steps of protein synthesis by forming a ternary complex with GTP and initiator tRNA.</text>
</comment>
<comment type="subunit">
    <text evidence="1">Heterotrimer composed of an alpha, a beta and a gamma chain.</text>
</comment>
<comment type="similarity">
    <text evidence="1">Belongs to the eIF-2-alpha family.</text>
</comment>
<organism>
    <name type="scientific">Saccharolobus islandicus (strain L.S.2.15 / Lassen #1)</name>
    <name type="common">Sulfolobus islandicus</name>
    <dbReference type="NCBI Taxonomy" id="429572"/>
    <lineage>
        <taxon>Archaea</taxon>
        <taxon>Thermoproteota</taxon>
        <taxon>Thermoprotei</taxon>
        <taxon>Sulfolobales</taxon>
        <taxon>Sulfolobaceae</taxon>
        <taxon>Saccharolobus</taxon>
    </lineage>
</organism>
<gene>
    <name evidence="1" type="primary">eif2a</name>
    <name type="ordered locus">LS215_1266</name>
</gene>
<name>IF2A_SACI2</name>
<dbReference type="EMBL" id="CP001399">
    <property type="protein sequence ID" value="ACP35276.1"/>
    <property type="molecule type" value="Genomic_DNA"/>
</dbReference>
<dbReference type="RefSeq" id="WP_012713608.1">
    <property type="nucleotide sequence ID" value="NC_012589.1"/>
</dbReference>
<dbReference type="SMR" id="C3MPG3"/>
<dbReference type="GeneID" id="7797777"/>
<dbReference type="KEGG" id="sis:LS215_1266"/>
<dbReference type="HOGENOM" id="CLU_033458_0_2_2"/>
<dbReference type="OrthoDB" id="84794at2157"/>
<dbReference type="Proteomes" id="UP000001747">
    <property type="component" value="Chromosome"/>
</dbReference>
<dbReference type="GO" id="GO:0043022">
    <property type="term" value="F:ribosome binding"/>
    <property type="evidence" value="ECO:0007669"/>
    <property type="project" value="TreeGrafter"/>
</dbReference>
<dbReference type="GO" id="GO:0003723">
    <property type="term" value="F:RNA binding"/>
    <property type="evidence" value="ECO:0007669"/>
    <property type="project" value="UniProtKB-UniRule"/>
</dbReference>
<dbReference type="GO" id="GO:0003743">
    <property type="term" value="F:translation initiation factor activity"/>
    <property type="evidence" value="ECO:0007669"/>
    <property type="project" value="UniProtKB-UniRule"/>
</dbReference>
<dbReference type="CDD" id="cd04452">
    <property type="entry name" value="S1_IF2_alpha"/>
    <property type="match status" value="1"/>
</dbReference>
<dbReference type="FunFam" id="2.40.50.140:FF:000015">
    <property type="entry name" value="Eukaryotic translation initiation factor 2 subunit alpha"/>
    <property type="match status" value="1"/>
</dbReference>
<dbReference type="Gene3D" id="3.30.70.1130">
    <property type="entry name" value="EIF_2_alpha"/>
    <property type="match status" value="1"/>
</dbReference>
<dbReference type="Gene3D" id="2.40.50.140">
    <property type="entry name" value="Nucleic acid-binding proteins"/>
    <property type="match status" value="1"/>
</dbReference>
<dbReference type="Gene3D" id="1.10.150.190">
    <property type="entry name" value="Translation initiation factor 2, subunit 1, domain 2"/>
    <property type="match status" value="1"/>
</dbReference>
<dbReference type="HAMAP" id="MF_00231">
    <property type="entry name" value="eIF_2_alpha"/>
    <property type="match status" value="1"/>
</dbReference>
<dbReference type="InterPro" id="IPR012340">
    <property type="entry name" value="NA-bd_OB-fold"/>
</dbReference>
<dbReference type="InterPro" id="IPR003029">
    <property type="entry name" value="S1_domain"/>
</dbReference>
<dbReference type="InterPro" id="IPR044126">
    <property type="entry name" value="S1_IF2_alpha"/>
</dbReference>
<dbReference type="InterPro" id="IPR022964">
    <property type="entry name" value="TIF2_asu_arc"/>
</dbReference>
<dbReference type="InterPro" id="IPR024055">
    <property type="entry name" value="TIF2_asu_C"/>
</dbReference>
<dbReference type="InterPro" id="IPR024054">
    <property type="entry name" value="TIF2_asu_middle_sf"/>
</dbReference>
<dbReference type="InterPro" id="IPR011488">
    <property type="entry name" value="TIF_2_asu"/>
</dbReference>
<dbReference type="NCBIfam" id="NF003062">
    <property type="entry name" value="PRK03987.1-1"/>
    <property type="match status" value="1"/>
</dbReference>
<dbReference type="PANTHER" id="PTHR10602">
    <property type="entry name" value="EUKARYOTIC TRANSLATION INITIATION FACTOR 2 SUBUNIT 1"/>
    <property type="match status" value="1"/>
</dbReference>
<dbReference type="PANTHER" id="PTHR10602:SF0">
    <property type="entry name" value="EUKARYOTIC TRANSLATION INITIATION FACTOR 2 SUBUNIT 1"/>
    <property type="match status" value="1"/>
</dbReference>
<dbReference type="Pfam" id="PF07541">
    <property type="entry name" value="EIF_2_alpha"/>
    <property type="match status" value="1"/>
</dbReference>
<dbReference type="Pfam" id="PF00575">
    <property type="entry name" value="S1"/>
    <property type="match status" value="1"/>
</dbReference>
<dbReference type="SMART" id="SM00316">
    <property type="entry name" value="S1"/>
    <property type="match status" value="1"/>
</dbReference>
<dbReference type="SUPFAM" id="SSF110993">
    <property type="entry name" value="eIF-2-alpha, C-terminal domain"/>
    <property type="match status" value="1"/>
</dbReference>
<dbReference type="SUPFAM" id="SSF116742">
    <property type="entry name" value="eIF2alpha middle domain-like"/>
    <property type="match status" value="1"/>
</dbReference>
<dbReference type="SUPFAM" id="SSF50249">
    <property type="entry name" value="Nucleic acid-binding proteins"/>
    <property type="match status" value="1"/>
</dbReference>
<dbReference type="PROSITE" id="PS50126">
    <property type="entry name" value="S1"/>
    <property type="match status" value="1"/>
</dbReference>
<evidence type="ECO:0000255" key="1">
    <source>
        <dbReference type="HAMAP-Rule" id="MF_00231"/>
    </source>
</evidence>